<feature type="chain" id="PRO_0000121382" description="Probable galactarate/D-glucarate transporter GarP">
    <location>
        <begin position="1"/>
        <end position="444"/>
    </location>
</feature>
<feature type="topological domain" description="Cytoplasmic" evidence="5">
    <location>
        <begin position="1"/>
        <end position="11"/>
    </location>
</feature>
<feature type="transmembrane region" description="Helical" evidence="1">
    <location>
        <begin position="12"/>
        <end position="32"/>
    </location>
</feature>
<feature type="topological domain" description="Periplasmic" evidence="5">
    <location>
        <begin position="33"/>
        <end position="56"/>
    </location>
</feature>
<feature type="transmembrane region" description="Helical" evidence="1">
    <location>
        <begin position="57"/>
        <end position="77"/>
    </location>
</feature>
<feature type="topological domain" description="Cytoplasmic" evidence="5">
    <location>
        <begin position="78"/>
        <end position="89"/>
    </location>
</feature>
<feature type="transmembrane region" description="Helical" evidence="1">
    <location>
        <begin position="90"/>
        <end position="110"/>
    </location>
</feature>
<feature type="transmembrane region" description="Helical" evidence="1">
    <location>
        <begin position="111"/>
        <end position="131"/>
    </location>
</feature>
<feature type="topological domain" description="Cytoplasmic" evidence="5">
    <location>
        <begin position="132"/>
        <end position="157"/>
    </location>
</feature>
<feature type="transmembrane region" description="Helical" evidence="1">
    <location>
        <begin position="158"/>
        <end position="178"/>
    </location>
</feature>
<feature type="transmembrane region" description="Helical" evidence="1">
    <location>
        <begin position="179"/>
        <end position="199"/>
    </location>
</feature>
<feature type="topological domain" description="Cytoplasmic" evidence="5">
    <location>
        <begin position="200"/>
        <end position="252"/>
    </location>
</feature>
<feature type="transmembrane region" description="Helical" evidence="1">
    <location>
        <begin position="253"/>
        <end position="273"/>
    </location>
</feature>
<feature type="topological domain" description="Periplasmic" evidence="5">
    <location>
        <begin position="274"/>
        <end position="288"/>
    </location>
</feature>
<feature type="transmembrane region" description="Helical" evidence="1">
    <location>
        <begin position="289"/>
        <end position="309"/>
    </location>
</feature>
<feature type="topological domain" description="Cytoplasmic" evidence="5">
    <location>
        <begin position="310"/>
        <end position="319"/>
    </location>
</feature>
<feature type="transmembrane region" description="Helical" evidence="1">
    <location>
        <begin position="320"/>
        <end position="340"/>
    </location>
</feature>
<feature type="topological domain" description="Periplasmic" evidence="5">
    <location>
        <begin position="341"/>
        <end position="350"/>
    </location>
</feature>
<feature type="transmembrane region" description="Helical" evidence="1">
    <location>
        <begin position="351"/>
        <end position="371"/>
    </location>
</feature>
<feature type="topological domain" description="Cytoplasmic" evidence="5">
    <location>
        <begin position="372"/>
        <end position="385"/>
    </location>
</feature>
<feature type="transmembrane region" description="Helical" evidence="1">
    <location>
        <begin position="386"/>
        <end position="406"/>
    </location>
</feature>
<feature type="topological domain" description="Periplasmic" evidence="5">
    <location>
        <begin position="407"/>
        <end position="413"/>
    </location>
</feature>
<feature type="transmembrane region" description="Helical" evidence="1">
    <location>
        <begin position="414"/>
        <end position="434"/>
    </location>
</feature>
<feature type="topological domain" description="Cytoplasmic" evidence="3">
    <location>
        <begin position="435"/>
        <end position="444"/>
    </location>
</feature>
<protein>
    <recommendedName>
        <fullName evidence="5">Probable galactarate/D-glucarate transporter GarP</fullName>
    </recommendedName>
</protein>
<evidence type="ECO:0000255" key="1"/>
<evidence type="ECO:0000269" key="2">
    <source>
    </source>
</evidence>
<evidence type="ECO:0000269" key="3">
    <source>
    </source>
</evidence>
<evidence type="ECO:0000303" key="4">
    <source>
    </source>
</evidence>
<evidence type="ECO:0000305" key="5"/>
<evidence type="ECO:0000305" key="6">
    <source>
    </source>
</evidence>
<evidence type="ECO:0000305" key="7">
    <source>
    </source>
</evidence>
<organism>
    <name type="scientific">Escherichia coli (strain K12)</name>
    <dbReference type="NCBI Taxonomy" id="83333"/>
    <lineage>
        <taxon>Bacteria</taxon>
        <taxon>Pseudomonadati</taxon>
        <taxon>Pseudomonadota</taxon>
        <taxon>Gammaproteobacteria</taxon>
        <taxon>Enterobacterales</taxon>
        <taxon>Enterobacteriaceae</taxon>
        <taxon>Escherichia</taxon>
    </lineage>
</organism>
<dbReference type="EMBL" id="U18997">
    <property type="protein sequence ID" value="AAA57930.1"/>
    <property type="molecule type" value="Genomic_DNA"/>
</dbReference>
<dbReference type="EMBL" id="U00096">
    <property type="protein sequence ID" value="AAC76161.1"/>
    <property type="molecule type" value="Genomic_DNA"/>
</dbReference>
<dbReference type="EMBL" id="AP009048">
    <property type="protein sequence ID" value="BAE77174.1"/>
    <property type="molecule type" value="Genomic_DNA"/>
</dbReference>
<dbReference type="PIR" id="C65102">
    <property type="entry name" value="C65102"/>
</dbReference>
<dbReference type="RefSeq" id="NP_417596.1">
    <property type="nucleotide sequence ID" value="NC_000913.3"/>
</dbReference>
<dbReference type="RefSeq" id="WP_000599636.1">
    <property type="nucleotide sequence ID" value="NZ_LN832404.1"/>
</dbReference>
<dbReference type="SMR" id="P0AA80"/>
<dbReference type="BioGRID" id="4259486">
    <property type="interactions" value="14"/>
</dbReference>
<dbReference type="FunCoup" id="P0AA80">
    <property type="interactions" value="307"/>
</dbReference>
<dbReference type="STRING" id="511145.b3127"/>
<dbReference type="jPOST" id="P0AA80"/>
<dbReference type="PaxDb" id="511145-b3127"/>
<dbReference type="EnsemblBacteria" id="AAC76161">
    <property type="protein sequence ID" value="AAC76161"/>
    <property type="gene ID" value="b3127"/>
</dbReference>
<dbReference type="GeneID" id="75203757"/>
<dbReference type="GeneID" id="947642"/>
<dbReference type="KEGG" id="ecj:JW3096"/>
<dbReference type="KEGG" id="eco:b3127"/>
<dbReference type="KEGG" id="ecoc:C3026_17045"/>
<dbReference type="PATRIC" id="fig|1411691.4.peg.3605"/>
<dbReference type="EchoBASE" id="EB2613"/>
<dbReference type="eggNOG" id="COG2271">
    <property type="taxonomic scope" value="Bacteria"/>
</dbReference>
<dbReference type="HOGENOM" id="CLU_001265_5_1_6"/>
<dbReference type="InParanoid" id="P0AA80"/>
<dbReference type="OMA" id="YNEQSQM"/>
<dbReference type="OrthoDB" id="9771451at2"/>
<dbReference type="PhylomeDB" id="P0AA80"/>
<dbReference type="BioCyc" id="EcoCyc:YHAU-MONOMER"/>
<dbReference type="BioCyc" id="MetaCyc:YHAU-MONOMER"/>
<dbReference type="PRO" id="PR:P0AA80"/>
<dbReference type="Proteomes" id="UP000000625">
    <property type="component" value="Chromosome"/>
</dbReference>
<dbReference type="GO" id="GO:0005886">
    <property type="term" value="C:plasma membrane"/>
    <property type="evidence" value="ECO:0000255"/>
    <property type="project" value="EcoCyc"/>
</dbReference>
<dbReference type="GO" id="GO:0022857">
    <property type="term" value="F:transmembrane transporter activity"/>
    <property type="evidence" value="ECO:0007669"/>
    <property type="project" value="InterPro"/>
</dbReference>
<dbReference type="GO" id="GO:0042836">
    <property type="term" value="P:D-glucarate metabolic process"/>
    <property type="evidence" value="ECO:0000315"/>
    <property type="project" value="EcoCyc"/>
</dbReference>
<dbReference type="GO" id="GO:0019580">
    <property type="term" value="P:galactarate metabolic process"/>
    <property type="evidence" value="ECO:0000270"/>
    <property type="project" value="EcoCyc"/>
</dbReference>
<dbReference type="GO" id="GO:0098656">
    <property type="term" value="P:monoatomic anion transmembrane transport"/>
    <property type="evidence" value="ECO:0007669"/>
    <property type="project" value="GOC"/>
</dbReference>
<dbReference type="CDD" id="cd17319">
    <property type="entry name" value="MFS_ExuT_GudP_like"/>
    <property type="match status" value="1"/>
</dbReference>
<dbReference type="FunFam" id="1.20.1250.20:FF:000006">
    <property type="entry name" value="MFS transporter"/>
    <property type="match status" value="1"/>
</dbReference>
<dbReference type="FunFam" id="1.20.1250.20:FF:000010">
    <property type="entry name" value="Probable glucarate transporter"/>
    <property type="match status" value="1"/>
</dbReference>
<dbReference type="Gene3D" id="1.20.1250.20">
    <property type="entry name" value="MFS general substrate transporter like domains"/>
    <property type="match status" value="2"/>
</dbReference>
<dbReference type="InterPro" id="IPR011701">
    <property type="entry name" value="MFS"/>
</dbReference>
<dbReference type="InterPro" id="IPR020846">
    <property type="entry name" value="MFS_dom"/>
</dbReference>
<dbReference type="InterPro" id="IPR050382">
    <property type="entry name" value="MFS_Na/Anion_cotransporter"/>
</dbReference>
<dbReference type="InterPro" id="IPR036259">
    <property type="entry name" value="MFS_trans_sf"/>
</dbReference>
<dbReference type="InterPro" id="IPR000849">
    <property type="entry name" value="Sugar_P_transporter"/>
</dbReference>
<dbReference type="NCBIfam" id="TIGR00893">
    <property type="entry name" value="2A0114"/>
    <property type="match status" value="1"/>
</dbReference>
<dbReference type="PANTHER" id="PTHR11662:SF399">
    <property type="entry name" value="FI19708P1-RELATED"/>
    <property type="match status" value="1"/>
</dbReference>
<dbReference type="PANTHER" id="PTHR11662">
    <property type="entry name" value="SOLUTE CARRIER FAMILY 17"/>
    <property type="match status" value="1"/>
</dbReference>
<dbReference type="Pfam" id="PF07690">
    <property type="entry name" value="MFS_1"/>
    <property type="match status" value="2"/>
</dbReference>
<dbReference type="PIRSF" id="PIRSF002808">
    <property type="entry name" value="Hexose_phosphate_transp"/>
    <property type="match status" value="1"/>
</dbReference>
<dbReference type="SUPFAM" id="SSF103473">
    <property type="entry name" value="MFS general substrate transporter"/>
    <property type="match status" value="1"/>
</dbReference>
<dbReference type="PROSITE" id="PS50850">
    <property type="entry name" value="MFS"/>
    <property type="match status" value="1"/>
</dbReference>
<comment type="function">
    <text evidence="6 7">Probably involved in the uptake of galactarate and/or D-glucarate (Probable). May also transport D-glycerate (Probable).</text>
</comment>
<comment type="catalytic activity">
    <reaction evidence="6 7">
        <text>galactarate(in) + H(+)(in) = galactarate(out) + H(+)(out)</text>
        <dbReference type="Rhea" id="RHEA:28478"/>
        <dbReference type="ChEBI" id="CHEBI:15378"/>
        <dbReference type="ChEBI" id="CHEBI:16537"/>
    </reaction>
</comment>
<comment type="catalytic activity">
    <reaction evidence="6 7">
        <text>D-glucarate(in) + H(+)(in) = D-glucarate(out) + H(+)(out)</text>
        <dbReference type="Rhea" id="RHEA:28474"/>
        <dbReference type="ChEBI" id="CHEBI:15378"/>
        <dbReference type="ChEBI" id="CHEBI:30612"/>
    </reaction>
</comment>
<comment type="catalytic activity">
    <reaction evidence="6">
        <text>(R)-glycerate(in) + H(+)(in) = (R)-glycerate(out) + H(+)(out)</text>
        <dbReference type="Rhea" id="RHEA:70927"/>
        <dbReference type="ChEBI" id="CHEBI:15378"/>
        <dbReference type="ChEBI" id="CHEBI:16659"/>
    </reaction>
</comment>
<comment type="subcellular location">
    <subcellularLocation>
        <location evidence="3">Cell inner membrane</location>
        <topology evidence="1">Multi-pass membrane protein</topology>
    </subcellularLocation>
</comment>
<comment type="induction">
    <text evidence="2">Induced in the presence of D-galactarate, D-glucarate or D-glycerate.</text>
</comment>
<comment type="similarity">
    <text evidence="5">Belongs to the major facilitator superfamily. Phthalate permease family.</text>
</comment>
<sequence length="444" mass="49009">MILDTVDEKKKGVHTRYLILLIIFIVTAVNYADRATLSIAGTEVAKELQLSAVSMGYIFSAFGWAYLLMQIPGGWLLDKFGSKKVYTYSLFFWSLFTFLQGFVDMFPLAWAGISMFFMRFMLGFSEAPSFPANARIVAAWFPTKERGTASAIFNSAQYFSLALFSPLLGWLTFAWGWEHVFTVMGVIGFVLTALWIKLIHNPTDHPRMSAEELKFISENGAVVDMDHKKPGSAAASGPKLHYIKQLLSNRMMLGVFFGQYFINTITWFFLTWFPIYLVQEKGMSILKVGLVASIPALCGFAGGVLGGVFSDYLIKRGLSLTLARKLPIVLGMLLASTIILCNYTNNTTLVVMLMALAFFGKGFGALGWPVISDTAPKEIVGLCGGVFNVFGNVASIVTPLVIGYLVSELHSFNAALVFVGCSALMAMVCYLFVVGDIKRMELQK</sequence>
<name>GARP_ECOLI</name>
<keyword id="KW-0997">Cell inner membrane</keyword>
<keyword id="KW-1003">Cell membrane</keyword>
<keyword id="KW-0472">Membrane</keyword>
<keyword id="KW-1185">Reference proteome</keyword>
<keyword id="KW-0812">Transmembrane</keyword>
<keyword id="KW-1133">Transmembrane helix</keyword>
<keyword id="KW-0813">Transport</keyword>
<accession>P0AA80</accession>
<accession>P42613</accession>
<accession>Q2M982</accession>
<gene>
    <name evidence="4" type="primary">garP</name>
    <name type="synonym">yhaU</name>
    <name type="ordered locus">b3127</name>
    <name type="ordered locus">JW3096</name>
</gene>
<proteinExistence type="evidence at protein level"/>
<reference key="1">
    <citation type="journal article" date="1997" name="Science">
        <title>The complete genome sequence of Escherichia coli K-12.</title>
        <authorList>
            <person name="Blattner F.R."/>
            <person name="Plunkett G. III"/>
            <person name="Bloch C.A."/>
            <person name="Perna N.T."/>
            <person name="Burland V."/>
            <person name="Riley M."/>
            <person name="Collado-Vides J."/>
            <person name="Glasner J.D."/>
            <person name="Rode C.K."/>
            <person name="Mayhew G.F."/>
            <person name="Gregor J."/>
            <person name="Davis N.W."/>
            <person name="Kirkpatrick H.A."/>
            <person name="Goeden M.A."/>
            <person name="Rose D.J."/>
            <person name="Mau B."/>
            <person name="Shao Y."/>
        </authorList>
    </citation>
    <scope>NUCLEOTIDE SEQUENCE [LARGE SCALE GENOMIC DNA]</scope>
    <source>
        <strain>K12 / MG1655 / ATCC 47076</strain>
    </source>
</reference>
<reference key="2">
    <citation type="journal article" date="2006" name="Mol. Syst. Biol.">
        <title>Highly accurate genome sequences of Escherichia coli K-12 strains MG1655 and W3110.</title>
        <authorList>
            <person name="Hayashi K."/>
            <person name="Morooka N."/>
            <person name="Yamamoto Y."/>
            <person name="Fujita K."/>
            <person name="Isono K."/>
            <person name="Choi S."/>
            <person name="Ohtsubo E."/>
            <person name="Baba T."/>
            <person name="Wanner B.L."/>
            <person name="Mori H."/>
            <person name="Horiuchi T."/>
        </authorList>
    </citation>
    <scope>NUCLEOTIDE SEQUENCE [LARGE SCALE GENOMIC DNA]</scope>
    <source>
        <strain>K12 / W3110 / ATCC 27325 / DSM 5911</strain>
    </source>
</reference>
<reference key="3">
    <citation type="journal article" date="1998" name="Biochemistry">
        <title>Evolution of enzymatic activities in the enolase superfamily: characterization of the (D)-glucarate/galactarate catabolic pathway in Escherichia coli.</title>
        <authorList>
            <person name="Hubbard B.K."/>
            <person name="Koch M."/>
            <person name="Palmer D.R."/>
            <person name="Babbitt P.C."/>
            <person name="Gerlt J.A."/>
        </authorList>
    </citation>
    <scope>POSSIBLE FUNCTION</scope>
</reference>
<reference key="4">
    <citation type="journal article" date="2000" name="J. Bacteriol.">
        <title>A common regulator for the operons encoding the enzymes involved in D-galactarate, D-glucarate, and D-glycerate utilization in Escherichia coli.</title>
        <authorList>
            <person name="Monterrubio R."/>
            <person name="Baldoma L."/>
            <person name="Obradors N."/>
            <person name="Aguilar J."/>
            <person name="Badia J."/>
        </authorList>
    </citation>
    <scope>POSSIBLE FUNCTION</scope>
    <scope>INDUCTION</scope>
    <scope>GENE NAME</scope>
</reference>
<reference key="5">
    <citation type="journal article" date="2005" name="Science">
        <title>Global topology analysis of the Escherichia coli inner membrane proteome.</title>
        <authorList>
            <person name="Daley D.O."/>
            <person name="Rapp M."/>
            <person name="Granseth E."/>
            <person name="Melen K."/>
            <person name="Drew D."/>
            <person name="von Heijne G."/>
        </authorList>
    </citation>
    <scope>TOPOLOGY [LARGE SCALE ANALYSIS]</scope>
    <scope>SUBCELLULAR LOCATION</scope>
    <source>
        <strain>K12 / MG1655 / ATCC 47076</strain>
    </source>
</reference>